<evidence type="ECO:0000255" key="1">
    <source>
        <dbReference type="HAMAP-Rule" id="MF_00580"/>
    </source>
</evidence>
<evidence type="ECO:0000305" key="2"/>
<feature type="chain" id="PRO_0000174894" description="Co-chaperonin GroES 1">
    <location>
        <begin position="1"/>
        <end position="96"/>
    </location>
</feature>
<comment type="function">
    <text evidence="1">Together with the chaperonin GroEL, plays an essential role in assisting protein folding. The GroEL-GroES system forms a nano-cage that allows encapsulation of the non-native substrate proteins and provides a physical environment optimized to promote and accelerate protein folding. GroES binds to the apical surface of the GroEL ring, thereby capping the opening of the GroEL channel.</text>
</comment>
<comment type="subunit">
    <text evidence="1">Heptamer of 7 subunits arranged in a ring. Interacts with the chaperonin GroEL.</text>
</comment>
<comment type="subcellular location">
    <subcellularLocation>
        <location evidence="1">Cytoplasm</location>
    </subcellularLocation>
</comment>
<comment type="similarity">
    <text evidence="1 2">Belongs to the GroES chaperonin family.</text>
</comment>
<keyword id="KW-0143">Chaperone</keyword>
<keyword id="KW-0963">Cytoplasm</keyword>
<name>CH101_VIBPA</name>
<reference key="1">
    <citation type="journal article" date="2003" name="Lancet">
        <title>Genome sequence of Vibrio parahaemolyticus: a pathogenic mechanism distinct from that of V. cholerae.</title>
        <authorList>
            <person name="Makino K."/>
            <person name="Oshima K."/>
            <person name="Kurokawa K."/>
            <person name="Yokoyama K."/>
            <person name="Uda T."/>
            <person name="Tagomori K."/>
            <person name="Iijima Y."/>
            <person name="Najima M."/>
            <person name="Nakano M."/>
            <person name="Yamashita A."/>
            <person name="Kubota Y."/>
            <person name="Kimura S."/>
            <person name="Yasunaga T."/>
            <person name="Honda T."/>
            <person name="Shinagawa H."/>
            <person name="Hattori M."/>
            <person name="Iida T."/>
        </authorList>
    </citation>
    <scope>NUCLEOTIDE SEQUENCE [LARGE SCALE GENOMIC DNA]</scope>
    <source>
        <strain>RIMD 2210633</strain>
    </source>
</reference>
<protein>
    <recommendedName>
        <fullName evidence="1">Co-chaperonin GroES 1</fullName>
    </recommendedName>
    <alternativeName>
        <fullName evidence="1">10 kDa chaperonin 1</fullName>
    </alternativeName>
    <alternativeName>
        <fullName evidence="1">Chaperonin-10 1</fullName>
        <shortName evidence="1">Cpn10 1</shortName>
    </alternativeName>
</protein>
<gene>
    <name evidence="1" type="primary">groES1</name>
    <name evidence="1" type="synonym">groS1</name>
    <name type="ordered locus">VP2852</name>
</gene>
<proteinExistence type="inferred from homology"/>
<organism>
    <name type="scientific">Vibrio parahaemolyticus serotype O3:K6 (strain RIMD 2210633)</name>
    <dbReference type="NCBI Taxonomy" id="223926"/>
    <lineage>
        <taxon>Bacteria</taxon>
        <taxon>Pseudomonadati</taxon>
        <taxon>Pseudomonadota</taxon>
        <taxon>Gammaproteobacteria</taxon>
        <taxon>Vibrionales</taxon>
        <taxon>Vibrionaceae</taxon>
        <taxon>Vibrio</taxon>
    </lineage>
</organism>
<sequence length="96" mass="10250">MNIRPLHDRVIVERKEVESKSAGGIVLTGSAAEKSTRGVVLAVGKGRILENGTVLPLDVKVGDTVIFAEGYGTKTEKIDGKEVLVMSENDIMAIVE</sequence>
<accession>Q87KX3</accession>
<dbReference type="EMBL" id="BA000031">
    <property type="protein sequence ID" value="BAC61115.1"/>
    <property type="molecule type" value="Genomic_DNA"/>
</dbReference>
<dbReference type="RefSeq" id="NP_799231.1">
    <property type="nucleotide sequence ID" value="NC_004603.1"/>
</dbReference>
<dbReference type="RefSeq" id="WP_005381516.1">
    <property type="nucleotide sequence ID" value="NC_004603.1"/>
</dbReference>
<dbReference type="SMR" id="Q87KX3"/>
<dbReference type="KEGG" id="vpa:VP2852"/>
<dbReference type="PATRIC" id="fig|223926.6.peg.2744"/>
<dbReference type="eggNOG" id="COG0234">
    <property type="taxonomic scope" value="Bacteria"/>
</dbReference>
<dbReference type="HOGENOM" id="CLU_132825_1_1_6"/>
<dbReference type="PRO" id="PR:Q87KX3"/>
<dbReference type="Proteomes" id="UP000002493">
    <property type="component" value="Chromosome 1"/>
</dbReference>
<dbReference type="GO" id="GO:0005737">
    <property type="term" value="C:cytoplasm"/>
    <property type="evidence" value="ECO:0007669"/>
    <property type="project" value="UniProtKB-SubCell"/>
</dbReference>
<dbReference type="GO" id="GO:0005524">
    <property type="term" value="F:ATP binding"/>
    <property type="evidence" value="ECO:0007669"/>
    <property type="project" value="InterPro"/>
</dbReference>
<dbReference type="GO" id="GO:0046872">
    <property type="term" value="F:metal ion binding"/>
    <property type="evidence" value="ECO:0007669"/>
    <property type="project" value="TreeGrafter"/>
</dbReference>
<dbReference type="GO" id="GO:0044183">
    <property type="term" value="F:protein folding chaperone"/>
    <property type="evidence" value="ECO:0007669"/>
    <property type="project" value="InterPro"/>
</dbReference>
<dbReference type="GO" id="GO:0051087">
    <property type="term" value="F:protein-folding chaperone binding"/>
    <property type="evidence" value="ECO:0007669"/>
    <property type="project" value="TreeGrafter"/>
</dbReference>
<dbReference type="GO" id="GO:0051082">
    <property type="term" value="F:unfolded protein binding"/>
    <property type="evidence" value="ECO:0007669"/>
    <property type="project" value="TreeGrafter"/>
</dbReference>
<dbReference type="GO" id="GO:0051085">
    <property type="term" value="P:chaperone cofactor-dependent protein refolding"/>
    <property type="evidence" value="ECO:0007669"/>
    <property type="project" value="TreeGrafter"/>
</dbReference>
<dbReference type="CDD" id="cd00320">
    <property type="entry name" value="cpn10"/>
    <property type="match status" value="1"/>
</dbReference>
<dbReference type="FunFam" id="2.30.33.40:FF:000001">
    <property type="entry name" value="10 kDa chaperonin"/>
    <property type="match status" value="1"/>
</dbReference>
<dbReference type="Gene3D" id="2.30.33.40">
    <property type="entry name" value="GroES chaperonin"/>
    <property type="match status" value="1"/>
</dbReference>
<dbReference type="HAMAP" id="MF_00580">
    <property type="entry name" value="CH10"/>
    <property type="match status" value="1"/>
</dbReference>
<dbReference type="InterPro" id="IPR020818">
    <property type="entry name" value="Chaperonin_GroES"/>
</dbReference>
<dbReference type="InterPro" id="IPR037124">
    <property type="entry name" value="Chaperonin_GroES_sf"/>
</dbReference>
<dbReference type="InterPro" id="IPR018369">
    <property type="entry name" value="Chaprnonin_Cpn10_CS"/>
</dbReference>
<dbReference type="InterPro" id="IPR011032">
    <property type="entry name" value="GroES-like_sf"/>
</dbReference>
<dbReference type="NCBIfam" id="NF001526">
    <property type="entry name" value="PRK00364.1-1"/>
    <property type="match status" value="1"/>
</dbReference>
<dbReference type="NCBIfam" id="NF001527">
    <property type="entry name" value="PRK00364.1-2"/>
    <property type="match status" value="1"/>
</dbReference>
<dbReference type="NCBIfam" id="NF001531">
    <property type="entry name" value="PRK00364.2-2"/>
    <property type="match status" value="1"/>
</dbReference>
<dbReference type="PANTHER" id="PTHR10772">
    <property type="entry name" value="10 KDA HEAT SHOCK PROTEIN"/>
    <property type="match status" value="1"/>
</dbReference>
<dbReference type="PANTHER" id="PTHR10772:SF58">
    <property type="entry name" value="CO-CHAPERONIN GROES"/>
    <property type="match status" value="1"/>
</dbReference>
<dbReference type="Pfam" id="PF00166">
    <property type="entry name" value="Cpn10"/>
    <property type="match status" value="1"/>
</dbReference>
<dbReference type="PRINTS" id="PR00297">
    <property type="entry name" value="CHAPERONIN10"/>
</dbReference>
<dbReference type="SMART" id="SM00883">
    <property type="entry name" value="Cpn10"/>
    <property type="match status" value="1"/>
</dbReference>
<dbReference type="SUPFAM" id="SSF50129">
    <property type="entry name" value="GroES-like"/>
    <property type="match status" value="1"/>
</dbReference>
<dbReference type="PROSITE" id="PS00681">
    <property type="entry name" value="CHAPERONINS_CPN10"/>
    <property type="match status" value="1"/>
</dbReference>